<dbReference type="EC" id="4.1.1.98" evidence="1"/>
<dbReference type="EMBL" id="CP000783">
    <property type="protein sequence ID" value="ABU78915.1"/>
    <property type="molecule type" value="Genomic_DNA"/>
</dbReference>
<dbReference type="RefSeq" id="WP_004385509.1">
    <property type="nucleotide sequence ID" value="NC_009778.1"/>
</dbReference>
<dbReference type="SMR" id="A7MQM8"/>
<dbReference type="KEGG" id="esa:ESA_03718"/>
<dbReference type="HOGENOM" id="CLU_023348_4_1_6"/>
<dbReference type="UniPathway" id="UPA00232"/>
<dbReference type="Proteomes" id="UP000000260">
    <property type="component" value="Chromosome"/>
</dbReference>
<dbReference type="GO" id="GO:0005829">
    <property type="term" value="C:cytosol"/>
    <property type="evidence" value="ECO:0007669"/>
    <property type="project" value="TreeGrafter"/>
</dbReference>
<dbReference type="GO" id="GO:0005886">
    <property type="term" value="C:plasma membrane"/>
    <property type="evidence" value="ECO:0007669"/>
    <property type="project" value="UniProtKB-SubCell"/>
</dbReference>
<dbReference type="GO" id="GO:0008694">
    <property type="term" value="F:3-octaprenyl-4-hydroxybenzoate carboxy-lyase activity"/>
    <property type="evidence" value="ECO:0007669"/>
    <property type="project" value="UniProtKB-UniRule"/>
</dbReference>
<dbReference type="GO" id="GO:0046872">
    <property type="term" value="F:metal ion binding"/>
    <property type="evidence" value="ECO:0007669"/>
    <property type="project" value="UniProtKB-KW"/>
</dbReference>
<dbReference type="GO" id="GO:0006744">
    <property type="term" value="P:ubiquinone biosynthetic process"/>
    <property type="evidence" value="ECO:0007669"/>
    <property type="project" value="UniProtKB-UniRule"/>
</dbReference>
<dbReference type="FunFam" id="1.20.5.570:FF:000001">
    <property type="entry name" value="3-octaprenyl-4-hydroxybenzoate carboxy-lyase"/>
    <property type="match status" value="1"/>
</dbReference>
<dbReference type="FunFam" id="3.40.1670.10:FF:000001">
    <property type="entry name" value="3-octaprenyl-4-hydroxybenzoate carboxy-lyase"/>
    <property type="match status" value="1"/>
</dbReference>
<dbReference type="Gene3D" id="1.20.5.570">
    <property type="entry name" value="Single helix bin"/>
    <property type="match status" value="1"/>
</dbReference>
<dbReference type="Gene3D" id="3.40.1670.10">
    <property type="entry name" value="UbiD C-terminal domain-like"/>
    <property type="match status" value="1"/>
</dbReference>
<dbReference type="HAMAP" id="MF_01636">
    <property type="entry name" value="UbiD"/>
    <property type="match status" value="1"/>
</dbReference>
<dbReference type="InterPro" id="IPR002830">
    <property type="entry name" value="UbiD"/>
</dbReference>
<dbReference type="InterPro" id="IPR049381">
    <property type="entry name" value="UbiD-like_C"/>
</dbReference>
<dbReference type="InterPro" id="IPR049383">
    <property type="entry name" value="UbiD-like_N"/>
</dbReference>
<dbReference type="InterPro" id="IPR023677">
    <property type="entry name" value="UbiD_bacteria"/>
</dbReference>
<dbReference type="InterPro" id="IPR048304">
    <property type="entry name" value="UbiD_Rift_dom"/>
</dbReference>
<dbReference type="NCBIfam" id="NF008175">
    <property type="entry name" value="PRK10922.1"/>
    <property type="match status" value="1"/>
</dbReference>
<dbReference type="NCBIfam" id="TIGR00148">
    <property type="entry name" value="UbiD family decarboxylase"/>
    <property type="match status" value="1"/>
</dbReference>
<dbReference type="PANTHER" id="PTHR30108">
    <property type="entry name" value="3-OCTAPRENYL-4-HYDROXYBENZOATE CARBOXY-LYASE-RELATED"/>
    <property type="match status" value="1"/>
</dbReference>
<dbReference type="PANTHER" id="PTHR30108:SF17">
    <property type="entry name" value="FERULIC ACID DECARBOXYLASE 1"/>
    <property type="match status" value="1"/>
</dbReference>
<dbReference type="Pfam" id="PF01977">
    <property type="entry name" value="UbiD"/>
    <property type="match status" value="1"/>
</dbReference>
<dbReference type="Pfam" id="PF20696">
    <property type="entry name" value="UbiD_C"/>
    <property type="match status" value="1"/>
</dbReference>
<dbReference type="Pfam" id="PF20695">
    <property type="entry name" value="UbiD_N"/>
    <property type="match status" value="1"/>
</dbReference>
<dbReference type="SUPFAM" id="SSF50475">
    <property type="entry name" value="FMN-binding split barrel"/>
    <property type="match status" value="1"/>
</dbReference>
<dbReference type="SUPFAM" id="SSF143968">
    <property type="entry name" value="UbiD C-terminal domain-like"/>
    <property type="match status" value="1"/>
</dbReference>
<sequence length="494" mass="55620">MKYHDLRDFLALLEQQGELKRITLPVDPYLEMTEIADRTLRAGGPALLFENPKGHTMPVLCNLFGTPKRVAMGMGQEDISALREVGKLLAFLKEPEPPRGFRDLFDKLPQFKQVLNMPTKRLRNAPCQEKVWQGDEVDLNRIPIMQCWPDDAAPLITWGLTVTRGPHKERQNLGIYRQQLIGKNKLIMRWLSHRGGALDFQEWCQAHPGERFPVAVALGADPATILGAVTPVPDTLSEYAFAGLLRGTKTEVVKCLSNDLEIPASAEIVLEGYIEPGEMAPEGPYGDHTGYYNEIDNFPVFTVTHVTQRENAIYHSTYTGRPPDEPAVLGVALNEVLVPILQKQFPEIVDFYLPPEGCSYRLAVVTMRKQYAGHAKRVMMGVWSFLRQFMYTKFVIVCDDDINARDWNDVIWAITTRMDPARDTVMVENTPIDYLDFASPVSGLGSKMGLDATNKWPGETQREWGTPIKKDPNVTARIDAIWDELAIFHDGKGA</sequence>
<evidence type="ECO:0000255" key="1">
    <source>
        <dbReference type="HAMAP-Rule" id="MF_01636"/>
    </source>
</evidence>
<reference key="1">
    <citation type="journal article" date="2010" name="PLoS ONE">
        <title>Genome sequence of Cronobacter sakazakii BAA-894 and comparative genomic hybridization analysis with other Cronobacter species.</title>
        <authorList>
            <person name="Kucerova E."/>
            <person name="Clifton S.W."/>
            <person name="Xia X.Q."/>
            <person name="Long F."/>
            <person name="Porwollik S."/>
            <person name="Fulton L."/>
            <person name="Fronick C."/>
            <person name="Minx P."/>
            <person name="Kyung K."/>
            <person name="Warren W."/>
            <person name="Fulton R."/>
            <person name="Feng D."/>
            <person name="Wollam A."/>
            <person name="Shah N."/>
            <person name="Bhonagiri V."/>
            <person name="Nash W.E."/>
            <person name="Hallsworth-Pepin K."/>
            <person name="Wilson R.K."/>
            <person name="McClelland M."/>
            <person name="Forsythe S.J."/>
        </authorList>
    </citation>
    <scope>NUCLEOTIDE SEQUENCE [LARGE SCALE GENOMIC DNA]</scope>
    <source>
        <strain>ATCC BAA-894</strain>
    </source>
</reference>
<name>UBID_CROS8</name>
<gene>
    <name evidence="1" type="primary">ubiD</name>
    <name type="ordered locus">ESA_03718</name>
</gene>
<comment type="function">
    <text evidence="1">Catalyzes the decarboxylation of 3-octaprenyl-4-hydroxy benzoate to 2-octaprenylphenol, an intermediate step in ubiquinone biosynthesis.</text>
</comment>
<comment type="catalytic activity">
    <reaction evidence="1">
        <text>a 4-hydroxy-3-(all-trans-polyprenyl)benzoate + H(+) = a 2-(all-trans-polyprenyl)phenol + CO2</text>
        <dbReference type="Rhea" id="RHEA:41680"/>
        <dbReference type="Rhea" id="RHEA-COMP:9514"/>
        <dbReference type="Rhea" id="RHEA-COMP:9516"/>
        <dbReference type="ChEBI" id="CHEBI:1269"/>
        <dbReference type="ChEBI" id="CHEBI:15378"/>
        <dbReference type="ChEBI" id="CHEBI:16526"/>
        <dbReference type="ChEBI" id="CHEBI:78396"/>
        <dbReference type="EC" id="4.1.1.98"/>
    </reaction>
</comment>
<comment type="cofactor">
    <cofactor evidence="1">
        <name>prenylated FMN</name>
        <dbReference type="ChEBI" id="CHEBI:87746"/>
    </cofactor>
    <text evidence="1">Binds 1 prenylated FMN per subunit.</text>
</comment>
<comment type="cofactor">
    <cofactor evidence="1">
        <name>Mn(2+)</name>
        <dbReference type="ChEBI" id="CHEBI:29035"/>
    </cofactor>
</comment>
<comment type="pathway">
    <text evidence="1">Cofactor biosynthesis; ubiquinone biosynthesis.</text>
</comment>
<comment type="subunit">
    <text evidence="1">Homohexamer.</text>
</comment>
<comment type="subcellular location">
    <subcellularLocation>
        <location evidence="1">Cell membrane</location>
        <topology evidence="1">Peripheral membrane protein</topology>
    </subcellularLocation>
</comment>
<comment type="similarity">
    <text evidence="1">Belongs to the UbiD family.</text>
</comment>
<feature type="chain" id="PRO_1000069845" description="3-octaprenyl-4-hydroxybenzoate carboxy-lyase">
    <location>
        <begin position="1"/>
        <end position="494"/>
    </location>
</feature>
<feature type="active site" description="Proton donor" evidence="1">
    <location>
        <position position="287"/>
    </location>
</feature>
<feature type="binding site" evidence="1">
    <location>
        <position position="172"/>
    </location>
    <ligand>
        <name>Mn(2+)</name>
        <dbReference type="ChEBI" id="CHEBI:29035"/>
    </ligand>
</feature>
<feature type="binding site" evidence="1">
    <location>
        <begin position="175"/>
        <end position="177"/>
    </location>
    <ligand>
        <name>prenylated FMN</name>
        <dbReference type="ChEBI" id="CHEBI:87746"/>
    </ligand>
</feature>
<feature type="binding site" evidence="1">
    <location>
        <begin position="189"/>
        <end position="191"/>
    </location>
    <ligand>
        <name>prenylated FMN</name>
        <dbReference type="ChEBI" id="CHEBI:87746"/>
    </ligand>
</feature>
<feature type="binding site" evidence="1">
    <location>
        <begin position="194"/>
        <end position="195"/>
    </location>
    <ligand>
        <name>prenylated FMN</name>
        <dbReference type="ChEBI" id="CHEBI:87746"/>
    </ligand>
</feature>
<feature type="binding site" evidence="1">
    <location>
        <position position="238"/>
    </location>
    <ligand>
        <name>Mn(2+)</name>
        <dbReference type="ChEBI" id="CHEBI:29035"/>
    </ligand>
</feature>
<keyword id="KW-1003">Cell membrane</keyword>
<keyword id="KW-0210">Decarboxylase</keyword>
<keyword id="KW-0285">Flavoprotein</keyword>
<keyword id="KW-0288">FMN</keyword>
<keyword id="KW-0456">Lyase</keyword>
<keyword id="KW-0464">Manganese</keyword>
<keyword id="KW-0472">Membrane</keyword>
<keyword id="KW-0479">Metal-binding</keyword>
<keyword id="KW-1185">Reference proteome</keyword>
<keyword id="KW-0831">Ubiquinone biosynthesis</keyword>
<organism>
    <name type="scientific">Cronobacter sakazakii (strain ATCC BAA-894)</name>
    <name type="common">Enterobacter sakazakii</name>
    <dbReference type="NCBI Taxonomy" id="290339"/>
    <lineage>
        <taxon>Bacteria</taxon>
        <taxon>Pseudomonadati</taxon>
        <taxon>Pseudomonadota</taxon>
        <taxon>Gammaproteobacteria</taxon>
        <taxon>Enterobacterales</taxon>
        <taxon>Enterobacteriaceae</taxon>
        <taxon>Cronobacter</taxon>
    </lineage>
</organism>
<protein>
    <recommendedName>
        <fullName evidence="1">3-octaprenyl-4-hydroxybenzoate carboxy-lyase</fullName>
        <ecNumber evidence="1">4.1.1.98</ecNumber>
    </recommendedName>
    <alternativeName>
        <fullName evidence="1">Polyprenyl p-hydroxybenzoate decarboxylase</fullName>
    </alternativeName>
</protein>
<accession>A7MQM8</accession>
<proteinExistence type="inferred from homology"/>